<feature type="chain" id="PRO_0000384761" description="Ribosome maturation factor RimP">
    <location>
        <begin position="1"/>
        <end position="154"/>
    </location>
</feature>
<gene>
    <name evidence="1" type="primary">rimP</name>
    <name type="ordered locus">SG3179</name>
</gene>
<proteinExistence type="inferred from homology"/>
<accession>B5REN8</accession>
<sequence length="154" mass="16954">MGGGLSTLEQKLTEMITAPVEALGYELVGIEFIRGRTSTLRIYIDSEDGINVDDCADVSHQVSAVLDVEDPISVAYNLEVSSPGLDRPMFTADHYARFQGEEVALVLRMAVQNRRKWQGIIKAVDGEMITVTVEGKDEVFALSNIQKANLVPHF</sequence>
<keyword id="KW-0963">Cytoplasm</keyword>
<keyword id="KW-0690">Ribosome biogenesis</keyword>
<evidence type="ECO:0000255" key="1">
    <source>
        <dbReference type="HAMAP-Rule" id="MF_01077"/>
    </source>
</evidence>
<organism>
    <name type="scientific">Salmonella gallinarum (strain 287/91 / NCTC 13346)</name>
    <dbReference type="NCBI Taxonomy" id="550538"/>
    <lineage>
        <taxon>Bacteria</taxon>
        <taxon>Pseudomonadati</taxon>
        <taxon>Pseudomonadota</taxon>
        <taxon>Gammaproteobacteria</taxon>
        <taxon>Enterobacterales</taxon>
        <taxon>Enterobacteriaceae</taxon>
        <taxon>Salmonella</taxon>
    </lineage>
</organism>
<reference key="1">
    <citation type="journal article" date="2008" name="Genome Res.">
        <title>Comparative genome analysis of Salmonella enteritidis PT4 and Salmonella gallinarum 287/91 provides insights into evolutionary and host adaptation pathways.</title>
        <authorList>
            <person name="Thomson N.R."/>
            <person name="Clayton D.J."/>
            <person name="Windhorst D."/>
            <person name="Vernikos G."/>
            <person name="Davidson S."/>
            <person name="Churcher C."/>
            <person name="Quail M.A."/>
            <person name="Stevens M."/>
            <person name="Jones M.A."/>
            <person name="Watson M."/>
            <person name="Barron A."/>
            <person name="Layton A."/>
            <person name="Pickard D."/>
            <person name="Kingsley R.A."/>
            <person name="Bignell A."/>
            <person name="Clark L."/>
            <person name="Harris B."/>
            <person name="Ormond D."/>
            <person name="Abdellah Z."/>
            <person name="Brooks K."/>
            <person name="Cherevach I."/>
            <person name="Chillingworth T."/>
            <person name="Woodward J."/>
            <person name="Norberczak H."/>
            <person name="Lord A."/>
            <person name="Arrowsmith C."/>
            <person name="Jagels K."/>
            <person name="Moule S."/>
            <person name="Mungall K."/>
            <person name="Saunders M."/>
            <person name="Whitehead S."/>
            <person name="Chabalgoity J.A."/>
            <person name="Maskell D."/>
            <person name="Humphreys T."/>
            <person name="Roberts M."/>
            <person name="Barrow P.A."/>
            <person name="Dougan G."/>
            <person name="Parkhill J."/>
        </authorList>
    </citation>
    <scope>NUCLEOTIDE SEQUENCE [LARGE SCALE GENOMIC DNA]</scope>
    <source>
        <strain>287/91 / NCTC 13346</strain>
    </source>
</reference>
<comment type="function">
    <text evidence="1">Required for maturation of 30S ribosomal subunits.</text>
</comment>
<comment type="subcellular location">
    <subcellularLocation>
        <location evidence="1">Cytoplasm</location>
    </subcellularLocation>
</comment>
<comment type="similarity">
    <text evidence="1">Belongs to the RimP family.</text>
</comment>
<name>RIMP_SALG2</name>
<protein>
    <recommendedName>
        <fullName evidence="1">Ribosome maturation factor RimP</fullName>
    </recommendedName>
</protein>
<dbReference type="EMBL" id="AM933173">
    <property type="protein sequence ID" value="CAR38978.1"/>
    <property type="molecule type" value="Genomic_DNA"/>
</dbReference>
<dbReference type="SMR" id="B5REN8"/>
<dbReference type="KEGG" id="seg:SG3179"/>
<dbReference type="HOGENOM" id="CLU_070525_1_1_6"/>
<dbReference type="Proteomes" id="UP000008321">
    <property type="component" value="Chromosome"/>
</dbReference>
<dbReference type="GO" id="GO:0005829">
    <property type="term" value="C:cytosol"/>
    <property type="evidence" value="ECO:0007669"/>
    <property type="project" value="TreeGrafter"/>
</dbReference>
<dbReference type="GO" id="GO:0000028">
    <property type="term" value="P:ribosomal small subunit assembly"/>
    <property type="evidence" value="ECO:0007669"/>
    <property type="project" value="TreeGrafter"/>
</dbReference>
<dbReference type="GO" id="GO:0006412">
    <property type="term" value="P:translation"/>
    <property type="evidence" value="ECO:0007669"/>
    <property type="project" value="TreeGrafter"/>
</dbReference>
<dbReference type="CDD" id="cd01734">
    <property type="entry name" value="YlxS_C"/>
    <property type="match status" value="1"/>
</dbReference>
<dbReference type="FunFam" id="2.30.30.180:FF:000001">
    <property type="entry name" value="Ribosome maturation factor RimP"/>
    <property type="match status" value="1"/>
</dbReference>
<dbReference type="FunFam" id="3.30.300.70:FF:000001">
    <property type="entry name" value="Ribosome maturation factor RimP"/>
    <property type="match status" value="1"/>
</dbReference>
<dbReference type="Gene3D" id="2.30.30.180">
    <property type="entry name" value="Ribosome maturation factor RimP, C-terminal domain"/>
    <property type="match status" value="1"/>
</dbReference>
<dbReference type="Gene3D" id="3.30.300.70">
    <property type="entry name" value="RimP-like superfamily, N-terminal"/>
    <property type="match status" value="1"/>
</dbReference>
<dbReference type="HAMAP" id="MF_01077">
    <property type="entry name" value="RimP"/>
    <property type="match status" value="1"/>
</dbReference>
<dbReference type="InterPro" id="IPR003728">
    <property type="entry name" value="Ribosome_maturation_RimP"/>
</dbReference>
<dbReference type="InterPro" id="IPR028998">
    <property type="entry name" value="RimP_C"/>
</dbReference>
<dbReference type="InterPro" id="IPR036847">
    <property type="entry name" value="RimP_C_sf"/>
</dbReference>
<dbReference type="InterPro" id="IPR028989">
    <property type="entry name" value="RimP_N"/>
</dbReference>
<dbReference type="InterPro" id="IPR035956">
    <property type="entry name" value="RimP_N_sf"/>
</dbReference>
<dbReference type="NCBIfam" id="NF000927">
    <property type="entry name" value="PRK00092.1-1"/>
    <property type="match status" value="1"/>
</dbReference>
<dbReference type="PANTHER" id="PTHR33867">
    <property type="entry name" value="RIBOSOME MATURATION FACTOR RIMP"/>
    <property type="match status" value="1"/>
</dbReference>
<dbReference type="PANTHER" id="PTHR33867:SF1">
    <property type="entry name" value="RIBOSOME MATURATION FACTOR RIMP"/>
    <property type="match status" value="1"/>
</dbReference>
<dbReference type="Pfam" id="PF17384">
    <property type="entry name" value="DUF150_C"/>
    <property type="match status" value="1"/>
</dbReference>
<dbReference type="Pfam" id="PF02576">
    <property type="entry name" value="RimP_N"/>
    <property type="match status" value="1"/>
</dbReference>
<dbReference type="SUPFAM" id="SSF74942">
    <property type="entry name" value="YhbC-like, C-terminal domain"/>
    <property type="match status" value="1"/>
</dbReference>
<dbReference type="SUPFAM" id="SSF75420">
    <property type="entry name" value="YhbC-like, N-terminal domain"/>
    <property type="match status" value="1"/>
</dbReference>